<comment type="function">
    <text evidence="5">Antimicrobial venom serine protease inhibitor. Exhibits inhibitory activity against chymotrypsin (IC(50)=19.56 nM, Ki=15.24 nM) and microbial serine proteases, such as subtilisin A (IC(50)=6.57 nM, Ki=6.83 nM) and proteinase K (IC(50)=7.11 nM, Ki=7.02 nM). Has not activity against trypsin, plasmin, tPA, thrombin, factor Xa or elastase. Binds and inhibits Gram-positive bacteria (B.subtilis (MIC=29.45 uM), B.thuringiensis (MIC=91.03 uM)) and the entomopathogenic fungus B.bassiana (MIC=30.09 uM) but not to E.coli.</text>
</comment>
<comment type="subcellular location">
    <subcellularLocation>
        <location evidence="5">Secreted</location>
    </subcellularLocation>
    <subcellularLocation>
        <location evidence="5">Target cell membrane</location>
    </subcellularLocation>
</comment>
<comment type="tissue specificity">
    <text evidence="5">Expressed by the venom gland (at protein level) and expressed in fat body.</text>
</comment>
<comment type="PTM">
    <text evidence="2">May be O-glycosylated.</text>
</comment>
<comment type="similarity">
    <text evidence="7">Belongs to the serine protease inhibitor-like (TIL domain-containing) family.</text>
</comment>
<sequence>MSRILFVFLAVMAIFSTSFGQQCGLNEEFKSCGSCEPTCAKPRVTICTMECKIGCQCKSGYLRNGEGTCVLPEKC</sequence>
<dbReference type="EMBL" id="KF500100">
    <property type="protein sequence ID" value="AGY95442.1"/>
    <property type="molecule type" value="mRNA"/>
</dbReference>
<dbReference type="EMBL" id="KF500101">
    <property type="protein sequence ID" value="AGY95443.1"/>
    <property type="molecule type" value="Genomic_DNA"/>
</dbReference>
<dbReference type="GO" id="GO:0005576">
    <property type="term" value="C:extracellular region"/>
    <property type="evidence" value="ECO:0000314"/>
    <property type="project" value="UniProtKB"/>
</dbReference>
<dbReference type="GO" id="GO:0004867">
    <property type="term" value="F:serine-type endopeptidase inhibitor activity"/>
    <property type="evidence" value="ECO:0000314"/>
    <property type="project" value="UniProtKB"/>
</dbReference>
<dbReference type="GO" id="GO:0042742">
    <property type="term" value="P:defense response to bacterium"/>
    <property type="evidence" value="ECO:0000314"/>
    <property type="project" value="UniProtKB"/>
</dbReference>
<dbReference type="GO" id="GO:0050832">
    <property type="term" value="P:defense response to fungus"/>
    <property type="evidence" value="ECO:0000314"/>
    <property type="project" value="UniProtKB"/>
</dbReference>
<dbReference type="GO" id="GO:0031640">
    <property type="term" value="P:killing of cells of another organism"/>
    <property type="evidence" value="ECO:0000314"/>
    <property type="project" value="UniProtKB"/>
</dbReference>
<dbReference type="CDD" id="cd19941">
    <property type="entry name" value="TIL"/>
    <property type="match status" value="1"/>
</dbReference>
<dbReference type="Gene3D" id="2.10.25.10">
    <property type="entry name" value="Laminin"/>
    <property type="match status" value="1"/>
</dbReference>
<dbReference type="InterPro" id="IPR036084">
    <property type="entry name" value="Ser_inhib-like_sf"/>
</dbReference>
<dbReference type="InterPro" id="IPR051368">
    <property type="entry name" value="SerProtInhib-TIL_Domain"/>
</dbReference>
<dbReference type="InterPro" id="IPR002919">
    <property type="entry name" value="TIL_dom"/>
</dbReference>
<dbReference type="PANTHER" id="PTHR23259:SF70">
    <property type="entry name" value="ACCESSORY GLAND PROTEIN ACP62F-RELATED"/>
    <property type="match status" value="1"/>
</dbReference>
<dbReference type="PANTHER" id="PTHR23259">
    <property type="entry name" value="RIDDLE"/>
    <property type="match status" value="1"/>
</dbReference>
<dbReference type="Pfam" id="PF01826">
    <property type="entry name" value="TIL"/>
    <property type="match status" value="1"/>
</dbReference>
<dbReference type="SUPFAM" id="SSF57567">
    <property type="entry name" value="Serine protease inhibitors"/>
    <property type="match status" value="1"/>
</dbReference>
<accession>U5T7E4</accession>
<evidence type="ECO:0000250" key="1">
    <source>
        <dbReference type="UniProtKB" id="A0A2R4SV19"/>
    </source>
</evidence>
<evidence type="ECO:0000250" key="2">
    <source>
        <dbReference type="UniProtKB" id="K7WRE1"/>
    </source>
</evidence>
<evidence type="ECO:0000250" key="3">
    <source>
        <dbReference type="UniProtKB" id="P07851"/>
    </source>
</evidence>
<evidence type="ECO:0000255" key="4"/>
<evidence type="ECO:0000269" key="5">
    <source>
    </source>
</evidence>
<evidence type="ECO:0000303" key="6">
    <source>
    </source>
</evidence>
<evidence type="ECO:0000305" key="7"/>
<evidence type="ECO:0000305" key="8">
    <source>
    </source>
</evidence>
<evidence type="ECO:0000312" key="9">
    <source>
        <dbReference type="EMBL" id="AGY95442.1"/>
    </source>
</evidence>
<proteinExistence type="evidence at protein level"/>
<feature type="signal peptide" evidence="4">
    <location>
        <begin position="1"/>
        <end position="20"/>
    </location>
</feature>
<feature type="chain" id="PRO_5007731416" description="Venom serine protease inhibitor BiVSPI" evidence="8">
    <location>
        <begin position="21"/>
        <end position="75"/>
    </location>
</feature>
<feature type="domain" description="TIL" evidence="4">
    <location>
        <begin position="23"/>
        <end position="75"/>
    </location>
</feature>
<feature type="site" description="Reactive bond" evidence="1">
    <location>
        <begin position="49"/>
        <end position="50"/>
    </location>
</feature>
<feature type="disulfide bond" evidence="3">
    <location>
        <begin position="23"/>
        <end position="55"/>
    </location>
</feature>
<feature type="disulfide bond" evidence="3">
    <location>
        <begin position="32"/>
        <end position="51"/>
    </location>
</feature>
<feature type="disulfide bond" evidence="3">
    <location>
        <begin position="35"/>
        <end position="47"/>
    </location>
</feature>
<feature type="disulfide bond" evidence="3">
    <location>
        <begin position="39"/>
        <end position="75"/>
    </location>
</feature>
<feature type="disulfide bond" evidence="3">
    <location>
        <begin position="57"/>
        <end position="69"/>
    </location>
</feature>
<reference evidence="9" key="1">
    <citation type="journal article" date="2014" name="Comp. Biochem. Physiol.">
        <title>A bumblebee (Bombus ignitus) venom serine protease inhibitor that acts as a microbial serine protease inhibitor.</title>
        <authorList>
            <person name="Wan H."/>
            <person name="Kim B.Y."/>
            <person name="Lee K.S."/>
            <person name="Yoon H.J."/>
            <person name="Lee K.Y."/>
            <person name="Jin B.R."/>
        </authorList>
    </citation>
    <scope>NUCLEOTIDE SEQUENCE [MRNA]</scope>
    <scope>FUNCTION</scope>
    <scope>TISSUE SPECIFICITY</scope>
    <scope>SUBCELLULAR LOCATION</scope>
    <scope>RECOMBINANT EXPRESSION</scope>
    <source>
        <tissue>Venom</tissue>
        <tissue>Venom gland</tissue>
    </source>
</reference>
<keyword id="KW-0044">Antibiotic</keyword>
<keyword id="KW-0929">Antimicrobial</keyword>
<keyword id="KW-1015">Disulfide bond</keyword>
<keyword id="KW-0295">Fungicide</keyword>
<keyword id="KW-0472">Membrane</keyword>
<keyword id="KW-0646">Protease inhibitor</keyword>
<keyword id="KW-0964">Secreted</keyword>
<keyword id="KW-0722">Serine protease inhibitor</keyword>
<keyword id="KW-0732">Signal</keyword>
<keyword id="KW-1052">Target cell membrane</keyword>
<keyword id="KW-1053">Target membrane</keyword>
<organism>
    <name type="scientific">Bombus ignitus</name>
    <name type="common">Bumblebee</name>
    <dbReference type="NCBI Taxonomy" id="130704"/>
    <lineage>
        <taxon>Eukaryota</taxon>
        <taxon>Metazoa</taxon>
        <taxon>Ecdysozoa</taxon>
        <taxon>Arthropoda</taxon>
        <taxon>Hexapoda</taxon>
        <taxon>Insecta</taxon>
        <taxon>Pterygota</taxon>
        <taxon>Neoptera</taxon>
        <taxon>Endopterygota</taxon>
        <taxon>Hymenoptera</taxon>
        <taxon>Apocrita</taxon>
        <taxon>Aculeata</taxon>
        <taxon>Apoidea</taxon>
        <taxon>Anthophila</taxon>
        <taxon>Apidae</taxon>
        <taxon>Bombus</taxon>
        <taxon>Bombus</taxon>
    </lineage>
</organism>
<protein>
    <recommendedName>
        <fullName evidence="6">Venom serine protease inhibitor BiVSPI</fullName>
    </recommendedName>
</protein>
<name>TILVI_BOMIG</name>